<proteinExistence type="evidence at protein level"/>
<protein>
    <recommendedName>
        <fullName>Glycoprotein 3</fullName>
    </recommendedName>
    <alternativeName>
        <fullName>Capsid size determination protein</fullName>
    </alternativeName>
</protein>
<evidence type="ECO:0000269" key="1">
    <source>
    </source>
</evidence>
<evidence type="ECO:0000305" key="2"/>
<dbReference type="EMBL" id="M29479">
    <property type="protein sequence ID" value="AAA32433.1"/>
    <property type="molecule type" value="Genomic_DNA"/>
</dbReference>
<dbReference type="EMBL" id="X51522">
    <property type="protein sequence ID" value="CAA35904.1"/>
    <property type="molecule type" value="Genomic_DNA"/>
</dbReference>
<dbReference type="EMBL" id="X02534">
    <property type="protein sequence ID" value="CAA26376.1"/>
    <property type="molecule type" value="Genomic_DNA"/>
</dbReference>
<dbReference type="EMBL" id="AH001325">
    <property type="protein sequence ID" value="AAA32431.1"/>
    <property type="molecule type" value="Genomic_DNA"/>
</dbReference>
<dbReference type="PIR" id="C23878">
    <property type="entry name" value="GSBPP4"/>
</dbReference>
<dbReference type="RefSeq" id="NP_042042.1">
    <property type="nucleotide sequence ID" value="NC_001609.1"/>
</dbReference>
<dbReference type="PDB" id="7JW1">
    <property type="method" value="EM"/>
    <property type="resolution" value="4.19 A"/>
    <property type="chains" value="E/e=1-244"/>
</dbReference>
<dbReference type="PDBsum" id="7JW1"/>
<dbReference type="EMDB" id="EMD-22513"/>
<dbReference type="SMR" id="P05461"/>
<dbReference type="KEGG" id="vg:1261087"/>
<dbReference type="Proteomes" id="UP000009093">
    <property type="component" value="Genome"/>
</dbReference>
<dbReference type="Gene3D" id="1.20.58.1090">
    <property type="entry name" value="Phage polarity suppression protein monomer"/>
    <property type="match status" value="1"/>
</dbReference>
<comment type="function">
    <text evidence="1">Although P4 acquires its capsid proteins from helper phages such as P2, it possesses the ability to assemble capsids that are only one-third the size of the helper's capsid. The sid protein is responsible for the assembly of P4-sized shells. It forms a P4-specific scaffold with icosahedral symmetry on the outside of the procapsid-like particles.</text>
</comment>
<name>VSID_BPP4</name>
<organism>
    <name type="scientific">Enterobacteria phage P4</name>
    <name type="common">Bacteriophage P4</name>
    <dbReference type="NCBI Taxonomy" id="10680"/>
    <lineage>
        <taxon>Viruses</taxon>
        <taxon>Duplodnaviria</taxon>
        <taxon>Heunggongvirae</taxon>
        <taxon>Uroviricota</taxon>
        <taxon>Caudoviricetes</taxon>
    </lineage>
</organism>
<accession>P05461</accession>
<organismHost>
    <name type="scientific">Escherichia coli</name>
    <dbReference type="NCBI Taxonomy" id="562"/>
</organismHost>
<reference key="1">
    <citation type="journal article" date="1984" name="Nucleic Acids Res.">
        <title>Nucleotide sequence of the essential region of bacteriophage P4.</title>
        <authorList>
            <person name="Lin C.-S."/>
        </authorList>
    </citation>
    <scope>NUCLEOTIDE SEQUENCE [GENOMIC DNA]</scope>
</reference>
<reference key="2">
    <citation type="journal article" date="1990" name="Nucleic Acids Res.">
        <title>DNA sequence of satellite bacteriophage P4.</title>
        <authorList>
            <person name="Halling C."/>
            <person name="Calendar R."/>
            <person name="Christie G.E."/>
            <person name="Dale E.C."/>
            <person name="Deho G."/>
            <person name="Finkel S."/>
            <person name="Flensburg J."/>
            <person name="Ghisotti D."/>
            <person name="Kahn M.L."/>
            <person name="Lane K.B."/>
            <person name="Lin C.-S."/>
            <person name="Lindqvist B.H."/>
            <person name="Pierson L.S."/>
            <person name="Six E.W."/>
            <person name="Sunshine M.G."/>
            <person name="Ziermann R."/>
        </authorList>
    </citation>
    <scope>NUCLEOTIDE SEQUENCE [LARGE SCALE GENOMIC DNA]</scope>
</reference>
<reference key="3">
    <citation type="journal article" date="1986" name="J. Mol. Biol.">
        <title>Organization and expression of the satellite bacteriophage P4 late gene cluster.</title>
        <authorList>
            <person name="Dale E.C."/>
            <person name="Christie G.E."/>
            <person name="Calendar R."/>
        </authorList>
    </citation>
    <scope>NUCLEOTIDE SEQUENCE [GENOMIC DNA] OF 1-78</scope>
</reference>
<reference key="4">
    <citation type="journal article" date="1990" name="J. Bacteriol.">
        <title>A mutation of the transactivation gene of satellite bacteriophage P4 that suppresses the rpoA109 mutation of Escherichia coli.</title>
        <authorList>
            <person name="Halling C."/>
            <person name="Sunshine M.G."/>
            <person name="Lane K.B."/>
            <person name="Six E.W."/>
            <person name="Calendar R."/>
        </authorList>
    </citation>
    <scope>NUCLEOTIDE SEQUENCE [GENOMIC DNA] OF 163-244</scope>
</reference>
<reference key="5">
    <citation type="journal article" date="1995" name="J. Mol. Biol.">
        <title>The capsid size-determining protein Sid forms an external scaffold on phage P4 procapsids.</title>
        <authorList>
            <person name="Marvik O.J."/>
            <person name="Dokland T."/>
            <person name="Nokling R.H."/>
            <person name="Jacobsen E."/>
            <person name="Larsen T."/>
            <person name="Lindqvist B.H."/>
        </authorList>
    </citation>
    <scope>FUNCTION</scope>
</reference>
<sequence length="244" mass="27258">MSDHTIPEYLQPALAQLEKARAAHLENARLMDETVTAIERAEQEKNALAQADGNDADDWRTAFRAAGGVLSDELKQRHIERVARRELVQEYDNLAVVLNFERERLKGACDSTATAYRKAHHHLLSLYAEHELEHALNETCEALVRAMHLSILVQENPLANTTGHQGYVAPEKAVMQQVKSSLEQKIKQMQISLTGEPVLRLTGLSAATLPHMDYEVAGTPAQRKVWQDKIDQQGAELKARGLLS</sequence>
<feature type="chain" id="PRO_0000165232" description="Glycoprotein 3">
    <location>
        <begin position="1"/>
        <end position="244"/>
    </location>
</feature>
<feature type="sequence conflict" description="In Ref. 1; CAA26376." evidence="2" ref="1">
    <original>V</original>
    <variation>W</variation>
    <location>
        <position position="198"/>
    </location>
</feature>
<gene>
    <name type="primary">sid</name>
</gene>
<keyword id="KW-0002">3D-structure</keyword>
<keyword id="KW-0426">Late protein</keyword>
<keyword id="KW-1185">Reference proteome</keyword>